<reference key="1">
    <citation type="journal article" date="2008" name="Environ. Microbiol.">
        <title>The genome of Erwinia tasmaniensis strain Et1/99, a non-pathogenic bacterium in the genus Erwinia.</title>
        <authorList>
            <person name="Kube M."/>
            <person name="Migdoll A.M."/>
            <person name="Mueller I."/>
            <person name="Kuhl H."/>
            <person name="Beck A."/>
            <person name="Reinhardt R."/>
            <person name="Geider K."/>
        </authorList>
    </citation>
    <scope>NUCLEOTIDE SEQUENCE [LARGE SCALE GENOMIC DNA]</scope>
    <source>
        <strain>DSM 17950 / CFBP 7177 / CIP 109463 / NCPPB 4357 / Et1/99</strain>
    </source>
</reference>
<evidence type="ECO:0000255" key="1">
    <source>
        <dbReference type="HAMAP-Rule" id="MF_01232"/>
    </source>
</evidence>
<evidence type="ECO:0000256" key="2">
    <source>
        <dbReference type="SAM" id="MobiDB-lite"/>
    </source>
</evidence>
<comment type="similarity">
    <text evidence="1">Belongs to the UPF0229 family.</text>
</comment>
<accession>B2VJ29</accession>
<dbReference type="EMBL" id="CU468135">
    <property type="protein sequence ID" value="CAO96600.1"/>
    <property type="molecule type" value="Genomic_DNA"/>
</dbReference>
<dbReference type="RefSeq" id="WP_012441293.1">
    <property type="nucleotide sequence ID" value="NC_010694.1"/>
</dbReference>
<dbReference type="SMR" id="B2VJ29"/>
<dbReference type="STRING" id="465817.ETA_15540"/>
<dbReference type="KEGG" id="eta:ETA_15540"/>
<dbReference type="eggNOG" id="COG2718">
    <property type="taxonomic scope" value="Bacteria"/>
</dbReference>
<dbReference type="HOGENOM" id="CLU_049702_0_0_6"/>
<dbReference type="OrthoDB" id="9788289at2"/>
<dbReference type="Proteomes" id="UP000001726">
    <property type="component" value="Chromosome"/>
</dbReference>
<dbReference type="HAMAP" id="MF_01232">
    <property type="entry name" value="UPF0229"/>
    <property type="match status" value="1"/>
</dbReference>
<dbReference type="InterPro" id="IPR006698">
    <property type="entry name" value="UPF0229"/>
</dbReference>
<dbReference type="NCBIfam" id="NF003707">
    <property type="entry name" value="PRK05325.1-2"/>
    <property type="match status" value="1"/>
</dbReference>
<dbReference type="NCBIfam" id="NF003708">
    <property type="entry name" value="PRK05325.1-3"/>
    <property type="match status" value="1"/>
</dbReference>
<dbReference type="PANTHER" id="PTHR30510">
    <property type="entry name" value="UPF0229 PROTEIN YEAH"/>
    <property type="match status" value="1"/>
</dbReference>
<dbReference type="PANTHER" id="PTHR30510:SF2">
    <property type="entry name" value="UPF0229 PROTEIN YEAH"/>
    <property type="match status" value="1"/>
</dbReference>
<dbReference type="Pfam" id="PF04285">
    <property type="entry name" value="DUF444"/>
    <property type="match status" value="1"/>
</dbReference>
<gene>
    <name type="ordered locus">ETA_15540</name>
</gene>
<sequence length="425" mass="49358">MAYFIDRRLNGKNKSAVNRQRFLRRYKSQIKQSISEAINKRSVTDVESGESVSIPIEDINEPSFHQGRGGERYRVHPGNDHFVQNDRVDRPQGGGAGGSGQGNAGKDGEGQDEFVFNISKDEYLDLLFEDLALPHLKKNQHRQLNEYKTHRAGYTANGVPANISVVRSLQNSLARRTAMTSGKRRRLAELEENLLRVENSEPAQLLEEQRLRNDIADLRARIKRVPFIDTFDLRYKNFEKRAEPSSQAVMFCLMDVSGSMDQPTKDMAKRFYILLYLFLSRTYKNVDVVYIRHHTQAKEVDEQEFFYSQETGGTIVSSALKLMDEVVKERYDPAQWNIYAAQASDGDNWADDSPLCHDILSRQILPVVRYYSYIEITRRAHQSLWREYEHLQATFDNFAIQHIREPEDIYPVFRELFKKQAEENY</sequence>
<proteinExistence type="inferred from homology"/>
<protein>
    <recommendedName>
        <fullName evidence="1">UPF0229 protein ETA_15540</fullName>
    </recommendedName>
</protein>
<name>Y1554_ERWT9</name>
<organism>
    <name type="scientific">Erwinia tasmaniensis (strain DSM 17950 / CFBP 7177 / CIP 109463 / NCPPB 4357 / Et1/99)</name>
    <dbReference type="NCBI Taxonomy" id="465817"/>
    <lineage>
        <taxon>Bacteria</taxon>
        <taxon>Pseudomonadati</taxon>
        <taxon>Pseudomonadota</taxon>
        <taxon>Gammaproteobacteria</taxon>
        <taxon>Enterobacterales</taxon>
        <taxon>Erwiniaceae</taxon>
        <taxon>Erwinia</taxon>
    </lineage>
</organism>
<feature type="chain" id="PRO_1000139647" description="UPF0229 protein ETA_15540">
    <location>
        <begin position="1"/>
        <end position="425"/>
    </location>
</feature>
<feature type="region of interest" description="Disordered" evidence="2">
    <location>
        <begin position="60"/>
        <end position="111"/>
    </location>
</feature>
<feature type="compositionally biased region" description="Basic and acidic residues" evidence="2">
    <location>
        <begin position="68"/>
        <end position="90"/>
    </location>
</feature>
<feature type="compositionally biased region" description="Gly residues" evidence="2">
    <location>
        <begin position="92"/>
        <end position="105"/>
    </location>
</feature>
<keyword id="KW-1185">Reference proteome</keyword>